<evidence type="ECO:0000250" key="1"/>
<evidence type="ECO:0000255" key="2"/>
<evidence type="ECO:0000255" key="3">
    <source>
        <dbReference type="PROSITE-ProRule" id="PRU10095"/>
    </source>
</evidence>
<evidence type="ECO:0000305" key="4"/>
<reference key="1">
    <citation type="journal article" date="2005" name="Infect. Immun.">
        <title>A metalloproteinase of Coccidioides posadasii contributes to evasion of host detection.</title>
        <authorList>
            <person name="Hung C.Y."/>
            <person name="Seshan K.R."/>
            <person name="Yu J.J."/>
            <person name="Schaller R."/>
            <person name="Xue J."/>
            <person name="Basrur V."/>
            <person name="Gardner M.J."/>
            <person name="Cole G.T."/>
        </authorList>
    </citation>
    <scope>NUCLEOTIDE SEQUENCE [GENOMIC DNA]</scope>
    <source>
        <strain>C735</strain>
    </source>
</reference>
<reference key="2">
    <citation type="journal article" date="2009" name="Genome Res.">
        <title>Comparative genomic analyses of the human fungal pathogens Coccidioides and their relatives.</title>
        <authorList>
            <person name="Sharpton T.J."/>
            <person name="Stajich J.E."/>
            <person name="Rounsley S.D."/>
            <person name="Gardner M.J."/>
            <person name="Wortman J.R."/>
            <person name="Jordar V.S."/>
            <person name="Maiti R."/>
            <person name="Kodira C.D."/>
            <person name="Neafsey D.E."/>
            <person name="Zeng Q."/>
            <person name="Hung C.-Y."/>
            <person name="McMahan C."/>
            <person name="Muszewska A."/>
            <person name="Grynberg M."/>
            <person name="Mandel M.A."/>
            <person name="Kellner E.M."/>
            <person name="Barker B.M."/>
            <person name="Galgiani J.N."/>
            <person name="Orbach M.J."/>
            <person name="Kirkland T.N."/>
            <person name="Cole G.T."/>
            <person name="Henn M.R."/>
            <person name="Birren B.W."/>
            <person name="Taylor J.W."/>
        </authorList>
    </citation>
    <scope>NUCLEOTIDE SEQUENCE [LARGE SCALE GENOMIC DNA]</scope>
    <source>
        <strain>C735</strain>
    </source>
</reference>
<organism>
    <name type="scientific">Coccidioides posadasii (strain C735)</name>
    <name type="common">Valley fever fungus</name>
    <dbReference type="NCBI Taxonomy" id="222929"/>
    <lineage>
        <taxon>Eukaryota</taxon>
        <taxon>Fungi</taxon>
        <taxon>Dikarya</taxon>
        <taxon>Ascomycota</taxon>
        <taxon>Pezizomycotina</taxon>
        <taxon>Eurotiomycetes</taxon>
        <taxon>Eurotiomycetidae</taxon>
        <taxon>Onygenales</taxon>
        <taxon>Onygenaceae</taxon>
        <taxon>Coccidioides</taxon>
    </lineage>
</organism>
<dbReference type="EC" id="3.4.24.39"/>
<dbReference type="EMBL" id="AY987812">
    <property type="protein sequence ID" value="AAY45758.1"/>
    <property type="molecule type" value="Genomic_DNA"/>
</dbReference>
<dbReference type="EMBL" id="ACFW01000001">
    <property type="protein sequence ID" value="EER29909.1"/>
    <property type="molecule type" value="Genomic_DNA"/>
</dbReference>
<dbReference type="RefSeq" id="XP_003072054.1">
    <property type="nucleotide sequence ID" value="XM_003072008.1"/>
</dbReference>
<dbReference type="SMR" id="C5NZL6"/>
<dbReference type="GeneID" id="9697549"/>
<dbReference type="KEGG" id="cpw:9697549"/>
<dbReference type="VEuPathDB" id="FungiDB:CPC735_012270"/>
<dbReference type="HOGENOM" id="CLU_039313_1_0_1"/>
<dbReference type="OrthoDB" id="412874at2759"/>
<dbReference type="BRENDA" id="3.4.24.39">
    <property type="organism ID" value="9184"/>
</dbReference>
<dbReference type="Proteomes" id="UP000009084">
    <property type="component" value="Unassembled WGS sequence"/>
</dbReference>
<dbReference type="GO" id="GO:0005576">
    <property type="term" value="C:extracellular region"/>
    <property type="evidence" value="ECO:0007669"/>
    <property type="project" value="UniProtKB-SubCell"/>
</dbReference>
<dbReference type="GO" id="GO:0046872">
    <property type="term" value="F:metal ion binding"/>
    <property type="evidence" value="ECO:0007669"/>
    <property type="project" value="UniProtKB-KW"/>
</dbReference>
<dbReference type="GO" id="GO:0004222">
    <property type="term" value="F:metalloendopeptidase activity"/>
    <property type="evidence" value="ECO:0007669"/>
    <property type="project" value="InterPro"/>
</dbReference>
<dbReference type="GO" id="GO:0006508">
    <property type="term" value="P:proteolysis"/>
    <property type="evidence" value="ECO:0007669"/>
    <property type="project" value="UniProtKB-KW"/>
</dbReference>
<dbReference type="CDD" id="cd11008">
    <property type="entry name" value="M35_deuterolysin_like"/>
    <property type="match status" value="1"/>
</dbReference>
<dbReference type="Gene3D" id="2.60.40.2970">
    <property type="match status" value="1"/>
</dbReference>
<dbReference type="Gene3D" id="3.40.390.10">
    <property type="entry name" value="Collagenase (Catalytic Domain)"/>
    <property type="match status" value="1"/>
</dbReference>
<dbReference type="InterPro" id="IPR050414">
    <property type="entry name" value="Fungal_M35_metalloproteases"/>
</dbReference>
<dbReference type="InterPro" id="IPR024079">
    <property type="entry name" value="MetalloPept_cat_dom_sf"/>
</dbReference>
<dbReference type="InterPro" id="IPR001384">
    <property type="entry name" value="Peptidase_M35"/>
</dbReference>
<dbReference type="PANTHER" id="PTHR37016">
    <property type="match status" value="1"/>
</dbReference>
<dbReference type="PANTHER" id="PTHR37016:SF3">
    <property type="entry name" value="NEUTRAL PROTEASE 2-RELATED"/>
    <property type="match status" value="1"/>
</dbReference>
<dbReference type="Pfam" id="PF02102">
    <property type="entry name" value="Peptidase_M35"/>
    <property type="match status" value="1"/>
</dbReference>
<dbReference type="PRINTS" id="PR00768">
    <property type="entry name" value="DEUTEROLYSIN"/>
</dbReference>
<dbReference type="SUPFAM" id="SSF55486">
    <property type="entry name" value="Metalloproteases ('zincins'), catalytic domain"/>
    <property type="match status" value="1"/>
</dbReference>
<dbReference type="PROSITE" id="PS00142">
    <property type="entry name" value="ZINC_PROTEASE"/>
    <property type="match status" value="1"/>
</dbReference>
<protein>
    <recommendedName>
        <fullName>Neutral protease 2 homolog MEP8</fullName>
        <ecNumber>3.4.24.39</ecNumber>
    </recommendedName>
    <alternativeName>
        <fullName>Deuterolysin MEP8</fullName>
    </alternativeName>
    <alternativeName>
        <fullName>Metalloproteinase 8</fullName>
    </alternativeName>
</protein>
<gene>
    <name type="primary">MEP8</name>
    <name type="ORF">CPC735_012270</name>
</gene>
<proteinExistence type="inferred from homology"/>
<sequence>MKLSSILLALAALVSPAFSYAISHLPRSEGGLDIKLTAIGNTRIKAIITNKADRPLKLLRYNNFFDDAPTQKVEIFKDGNAVQFEGIYQHIYMTDLPDEDFISLTPGESIEREVDIATTADLTQGGAFTISSQGLIPFAEVDSNEVTGAMAFHANDLEMDVDGAVAATVEKAIKPVDKRSRLTNSCTGQRRTATVRAIQASAQLSQRSAQVAQNNAQKLQEYFKQTDQRTRQLVVNRFTAVARESTVNGGRTTYDCTDRMGHCQPRTIAYTLPAQNHITNCPIFYQMPLLTNRCHGQDQATTVLHEITHNPAIVQPHCVDHGYGYQAVRRLNAQQSLQNADTYSLFANGKMTFRLFLY</sequence>
<keyword id="KW-0165">Cleavage on pair of basic residues</keyword>
<keyword id="KW-1015">Disulfide bond</keyword>
<keyword id="KW-0378">Hydrolase</keyword>
<keyword id="KW-0479">Metal-binding</keyword>
<keyword id="KW-0482">Metalloprotease</keyword>
<keyword id="KW-0645">Protease</keyword>
<keyword id="KW-0964">Secreted</keyword>
<keyword id="KW-0732">Signal</keyword>
<keyword id="KW-0843">Virulence</keyword>
<keyword id="KW-0862">Zinc</keyword>
<keyword id="KW-0865">Zymogen</keyword>
<feature type="signal peptide" evidence="2">
    <location>
        <begin position="1"/>
        <end position="19"/>
    </location>
</feature>
<feature type="propeptide" id="PRO_0000407078" evidence="1">
    <location>
        <begin position="20"/>
        <end position="179"/>
    </location>
</feature>
<feature type="chain" id="PRO_0000407079" description="Neutral protease 2 homolog MEP8">
    <location>
        <begin position="180"/>
        <end position="358"/>
    </location>
</feature>
<feature type="active site" evidence="3">
    <location>
        <position position="306"/>
    </location>
</feature>
<feature type="binding site" evidence="3">
    <location>
        <position position="305"/>
    </location>
    <ligand>
        <name>Zn(2+)</name>
        <dbReference type="ChEBI" id="CHEBI:29105"/>
        <note>catalytic</note>
    </ligand>
</feature>
<feature type="binding site" evidence="3">
    <location>
        <position position="309"/>
    </location>
    <ligand>
        <name>Zn(2+)</name>
        <dbReference type="ChEBI" id="CHEBI:29105"/>
        <note>catalytic</note>
    </ligand>
</feature>
<feature type="binding site" evidence="3">
    <location>
        <position position="320"/>
    </location>
    <ligand>
        <name>Zn(2+)</name>
        <dbReference type="ChEBI" id="CHEBI:29105"/>
        <note>catalytic</note>
    </ligand>
</feature>
<feature type="disulfide bond" evidence="1">
    <location>
        <begin position="186"/>
        <end position="256"/>
    </location>
</feature>
<feature type="disulfide bond" evidence="1">
    <location>
        <begin position="263"/>
        <end position="281"/>
    </location>
</feature>
<accession>C5NZL6</accession>
<accession>Q3KRQ5</accession>
<comment type="function">
    <text evidence="1">Secreted metalloproteinase that allows assimilation of proteinaceous substrates. Shows high activities on basic nuclear substrates such as histone and protamine. May be involved in virulence (By similarity).</text>
</comment>
<comment type="catalytic activity">
    <reaction>
        <text>Preferential cleavage of bonds with hydrophobic residues in P1'. Also 3-Asn-|-Gln-4 and 8-Gly-|-Ser-9 bonds in insulin B chain.</text>
        <dbReference type="EC" id="3.4.24.39"/>
    </reaction>
</comment>
<comment type="cofactor">
    <cofactor evidence="1">
        <name>Zn(2+)</name>
        <dbReference type="ChEBI" id="CHEBI:29105"/>
    </cofactor>
    <text evidence="1">Binds 1 zinc ion per subunit.</text>
</comment>
<comment type="subcellular location">
    <subcellularLocation>
        <location evidence="1">Secreted</location>
    </subcellularLocation>
</comment>
<comment type="similarity">
    <text evidence="4">Belongs to the peptidase M35 family.</text>
</comment>
<name>MEP8_COCP7</name>